<keyword id="KW-0488">Methylation</keyword>
<keyword id="KW-1185">Reference proteome</keyword>
<keyword id="KW-0687">Ribonucleoprotein</keyword>
<keyword id="KW-0689">Ribosomal protein</keyword>
<keyword id="KW-0694">RNA-binding</keyword>
<keyword id="KW-0699">rRNA-binding</keyword>
<keyword id="KW-0820">tRNA-binding</keyword>
<proteinExistence type="inferred from homology"/>
<organism>
    <name type="scientific">Protochlamydia amoebophila (strain UWE25)</name>
    <dbReference type="NCBI Taxonomy" id="264201"/>
    <lineage>
        <taxon>Bacteria</taxon>
        <taxon>Pseudomonadati</taxon>
        <taxon>Chlamydiota</taxon>
        <taxon>Chlamydiia</taxon>
        <taxon>Parachlamydiales</taxon>
        <taxon>Parachlamydiaceae</taxon>
        <taxon>Candidatus Protochlamydia</taxon>
    </lineage>
</organism>
<protein>
    <recommendedName>
        <fullName evidence="2">Small ribosomal subunit protein uS12</fullName>
    </recommendedName>
    <alternativeName>
        <fullName evidence="4">30S ribosomal protein S12</fullName>
    </alternativeName>
</protein>
<sequence>MPTIQQLIRQPRAPKKRRSKSPALQKCPQRRGVCLQVKTKTPKKPNSALRKVAWVRLSTGQEVIAYIGGEGHNLQEHSIVLVRGGRVKDLPGVRYHIVRGALDCAAVKDRKQGRSKYGAKRPKSKK</sequence>
<accession>Q6MER6</accession>
<comment type="function">
    <text evidence="2">With S4 and S5 plays an important role in translational accuracy.</text>
</comment>
<comment type="function">
    <text evidence="2">Interacts with and stabilizes bases of the 16S rRNA that are involved in tRNA selection in the A site and with the mRNA backbone. Located at the interface of the 30S and 50S subunits, it traverses the body of the 30S subunit contacting proteins on the other side and probably holding the rRNA structure together. The combined cluster of proteins S8, S12 and S17 appears to hold together the shoulder and platform of the 30S subunit.</text>
</comment>
<comment type="subunit">
    <text evidence="2">Part of the 30S ribosomal subunit. Contacts proteins S8 and S17. May interact with IF1 in the 30S initiation complex.</text>
</comment>
<comment type="similarity">
    <text evidence="2">Belongs to the universal ribosomal protein uS12 family.</text>
</comment>
<feature type="chain" id="PRO_0000146280" description="Small ribosomal subunit protein uS12">
    <location>
        <begin position="1"/>
        <end position="126"/>
    </location>
</feature>
<feature type="region of interest" description="Disordered" evidence="3">
    <location>
        <begin position="1"/>
        <end position="29"/>
    </location>
</feature>
<feature type="modified residue" description="3-methylthioaspartic acid" evidence="1">
    <location>
        <position position="89"/>
    </location>
</feature>
<dbReference type="EMBL" id="BX908798">
    <property type="protein sequence ID" value="CAF22933.1"/>
    <property type="molecule type" value="Genomic_DNA"/>
</dbReference>
<dbReference type="RefSeq" id="WP_011174759.1">
    <property type="nucleotide sequence ID" value="NC_005861.2"/>
</dbReference>
<dbReference type="SMR" id="Q6MER6"/>
<dbReference type="STRING" id="264201.pc0209"/>
<dbReference type="KEGG" id="pcu:PC_RS01025"/>
<dbReference type="eggNOG" id="COG0048">
    <property type="taxonomic scope" value="Bacteria"/>
</dbReference>
<dbReference type="HOGENOM" id="CLU_104295_1_2_0"/>
<dbReference type="OrthoDB" id="9802366at2"/>
<dbReference type="Proteomes" id="UP000000529">
    <property type="component" value="Chromosome"/>
</dbReference>
<dbReference type="GO" id="GO:0015935">
    <property type="term" value="C:small ribosomal subunit"/>
    <property type="evidence" value="ECO:0007669"/>
    <property type="project" value="InterPro"/>
</dbReference>
<dbReference type="GO" id="GO:0019843">
    <property type="term" value="F:rRNA binding"/>
    <property type="evidence" value="ECO:0007669"/>
    <property type="project" value="UniProtKB-UniRule"/>
</dbReference>
<dbReference type="GO" id="GO:0003735">
    <property type="term" value="F:structural constituent of ribosome"/>
    <property type="evidence" value="ECO:0007669"/>
    <property type="project" value="InterPro"/>
</dbReference>
<dbReference type="GO" id="GO:0000049">
    <property type="term" value="F:tRNA binding"/>
    <property type="evidence" value="ECO:0007669"/>
    <property type="project" value="UniProtKB-UniRule"/>
</dbReference>
<dbReference type="GO" id="GO:0006412">
    <property type="term" value="P:translation"/>
    <property type="evidence" value="ECO:0007669"/>
    <property type="project" value="UniProtKB-UniRule"/>
</dbReference>
<dbReference type="CDD" id="cd03368">
    <property type="entry name" value="Ribosomal_S12"/>
    <property type="match status" value="1"/>
</dbReference>
<dbReference type="FunFam" id="2.40.50.140:FF:000001">
    <property type="entry name" value="30S ribosomal protein S12"/>
    <property type="match status" value="1"/>
</dbReference>
<dbReference type="Gene3D" id="2.40.50.140">
    <property type="entry name" value="Nucleic acid-binding proteins"/>
    <property type="match status" value="1"/>
</dbReference>
<dbReference type="HAMAP" id="MF_00403_B">
    <property type="entry name" value="Ribosomal_uS12_B"/>
    <property type="match status" value="1"/>
</dbReference>
<dbReference type="InterPro" id="IPR012340">
    <property type="entry name" value="NA-bd_OB-fold"/>
</dbReference>
<dbReference type="InterPro" id="IPR006032">
    <property type="entry name" value="Ribosomal_uS12"/>
</dbReference>
<dbReference type="InterPro" id="IPR005679">
    <property type="entry name" value="Ribosomal_uS12_bac"/>
</dbReference>
<dbReference type="NCBIfam" id="TIGR00981">
    <property type="entry name" value="rpsL_bact"/>
    <property type="match status" value="1"/>
</dbReference>
<dbReference type="PANTHER" id="PTHR11652">
    <property type="entry name" value="30S RIBOSOMAL PROTEIN S12 FAMILY MEMBER"/>
    <property type="match status" value="1"/>
</dbReference>
<dbReference type="Pfam" id="PF00164">
    <property type="entry name" value="Ribosom_S12_S23"/>
    <property type="match status" value="1"/>
</dbReference>
<dbReference type="PIRSF" id="PIRSF002133">
    <property type="entry name" value="Ribosomal_S12/S23"/>
    <property type="match status" value="1"/>
</dbReference>
<dbReference type="PRINTS" id="PR01034">
    <property type="entry name" value="RIBOSOMALS12"/>
</dbReference>
<dbReference type="SUPFAM" id="SSF50249">
    <property type="entry name" value="Nucleic acid-binding proteins"/>
    <property type="match status" value="1"/>
</dbReference>
<dbReference type="PROSITE" id="PS00055">
    <property type="entry name" value="RIBOSOMAL_S12"/>
    <property type="match status" value="1"/>
</dbReference>
<gene>
    <name evidence="2" type="primary">rpsL</name>
    <name type="ordered locus">pc0209</name>
</gene>
<name>RS12_PARUW</name>
<evidence type="ECO:0000250" key="1"/>
<evidence type="ECO:0000255" key="2">
    <source>
        <dbReference type="HAMAP-Rule" id="MF_00403"/>
    </source>
</evidence>
<evidence type="ECO:0000256" key="3">
    <source>
        <dbReference type="SAM" id="MobiDB-lite"/>
    </source>
</evidence>
<evidence type="ECO:0000305" key="4"/>
<reference key="1">
    <citation type="journal article" date="2004" name="Science">
        <title>Illuminating the evolutionary history of chlamydiae.</title>
        <authorList>
            <person name="Horn M."/>
            <person name="Collingro A."/>
            <person name="Schmitz-Esser S."/>
            <person name="Beier C.L."/>
            <person name="Purkhold U."/>
            <person name="Fartmann B."/>
            <person name="Brandt P."/>
            <person name="Nyakatura G.J."/>
            <person name="Droege M."/>
            <person name="Frishman D."/>
            <person name="Rattei T."/>
            <person name="Mewes H.-W."/>
            <person name="Wagner M."/>
        </authorList>
    </citation>
    <scope>NUCLEOTIDE SEQUENCE [LARGE SCALE GENOMIC DNA]</scope>
    <source>
        <strain>UWE25</strain>
    </source>
</reference>